<proteinExistence type="inferred from homology"/>
<comment type="function">
    <text evidence="1">This is one of the proteins that bind and probably mediate the attachment of the 5S RNA into the large ribosomal subunit, where it forms part of the central protuberance. In the 70S ribosome it contacts protein S13 of the 30S subunit (bridge B1b), connecting the 2 subunits; this bridge is implicated in subunit movement. Contacts the P site tRNA; the 5S rRNA and some of its associated proteins might help stabilize positioning of ribosome-bound tRNAs.</text>
</comment>
<comment type="subunit">
    <text evidence="1">Part of the 50S ribosomal subunit; part of the 5S rRNA/L5/L18/L25 subcomplex. Contacts the 5S rRNA and the P site tRNA. Forms a bridge to the 30S subunit in the 70S ribosome.</text>
</comment>
<comment type="similarity">
    <text evidence="1">Belongs to the universal ribosomal protein uL5 family.</text>
</comment>
<reference key="1">
    <citation type="submission" date="2006-11" db="EMBL/GenBank/DDBJ databases">
        <title>Identification and characterization of a new conjugation/ type IVA secretion system (trb/tra) of L. pneumophila Corby localized on a mobile genomic island.</title>
        <authorList>
            <person name="Gloeckner G."/>
            <person name="Albert-Weissenberger C."/>
            <person name="Weinmann E."/>
            <person name="Jacobi S."/>
            <person name="Schunder E."/>
            <person name="Steinert M."/>
            <person name="Buchrieser C."/>
            <person name="Hacker J."/>
            <person name="Heuner K."/>
        </authorList>
    </citation>
    <scope>NUCLEOTIDE SEQUENCE [LARGE SCALE GENOMIC DNA]</scope>
    <source>
        <strain>Corby</strain>
    </source>
</reference>
<dbReference type="EMBL" id="CP000675">
    <property type="protein sequence ID" value="ABQ56902.1"/>
    <property type="molecule type" value="Genomic_DNA"/>
</dbReference>
<dbReference type="RefSeq" id="WP_010946090.1">
    <property type="nucleotide sequence ID" value="NZ_JAPMSS010000006.1"/>
</dbReference>
<dbReference type="SMR" id="A5IHQ2"/>
<dbReference type="GeneID" id="57034344"/>
<dbReference type="KEGG" id="lpc:LPC_3001"/>
<dbReference type="HOGENOM" id="CLU_061015_2_1_6"/>
<dbReference type="GO" id="GO:1990904">
    <property type="term" value="C:ribonucleoprotein complex"/>
    <property type="evidence" value="ECO:0007669"/>
    <property type="project" value="UniProtKB-KW"/>
</dbReference>
<dbReference type="GO" id="GO:0005840">
    <property type="term" value="C:ribosome"/>
    <property type="evidence" value="ECO:0007669"/>
    <property type="project" value="UniProtKB-KW"/>
</dbReference>
<dbReference type="GO" id="GO:0019843">
    <property type="term" value="F:rRNA binding"/>
    <property type="evidence" value="ECO:0007669"/>
    <property type="project" value="UniProtKB-UniRule"/>
</dbReference>
<dbReference type="GO" id="GO:0003735">
    <property type="term" value="F:structural constituent of ribosome"/>
    <property type="evidence" value="ECO:0007669"/>
    <property type="project" value="InterPro"/>
</dbReference>
<dbReference type="GO" id="GO:0000049">
    <property type="term" value="F:tRNA binding"/>
    <property type="evidence" value="ECO:0007669"/>
    <property type="project" value="UniProtKB-UniRule"/>
</dbReference>
<dbReference type="GO" id="GO:0006412">
    <property type="term" value="P:translation"/>
    <property type="evidence" value="ECO:0007669"/>
    <property type="project" value="UniProtKB-UniRule"/>
</dbReference>
<dbReference type="FunFam" id="3.30.1440.10:FF:000001">
    <property type="entry name" value="50S ribosomal protein L5"/>
    <property type="match status" value="1"/>
</dbReference>
<dbReference type="Gene3D" id="3.30.1440.10">
    <property type="match status" value="1"/>
</dbReference>
<dbReference type="HAMAP" id="MF_01333_B">
    <property type="entry name" value="Ribosomal_uL5_B"/>
    <property type="match status" value="1"/>
</dbReference>
<dbReference type="InterPro" id="IPR002132">
    <property type="entry name" value="Ribosomal_uL5"/>
</dbReference>
<dbReference type="InterPro" id="IPR020930">
    <property type="entry name" value="Ribosomal_uL5_bac-type"/>
</dbReference>
<dbReference type="InterPro" id="IPR031309">
    <property type="entry name" value="Ribosomal_uL5_C"/>
</dbReference>
<dbReference type="InterPro" id="IPR020929">
    <property type="entry name" value="Ribosomal_uL5_CS"/>
</dbReference>
<dbReference type="InterPro" id="IPR022803">
    <property type="entry name" value="Ribosomal_uL5_dom_sf"/>
</dbReference>
<dbReference type="InterPro" id="IPR031310">
    <property type="entry name" value="Ribosomal_uL5_N"/>
</dbReference>
<dbReference type="NCBIfam" id="NF000585">
    <property type="entry name" value="PRK00010.1"/>
    <property type="match status" value="1"/>
</dbReference>
<dbReference type="PANTHER" id="PTHR11994">
    <property type="entry name" value="60S RIBOSOMAL PROTEIN L11-RELATED"/>
    <property type="match status" value="1"/>
</dbReference>
<dbReference type="Pfam" id="PF00281">
    <property type="entry name" value="Ribosomal_L5"/>
    <property type="match status" value="1"/>
</dbReference>
<dbReference type="Pfam" id="PF00673">
    <property type="entry name" value="Ribosomal_L5_C"/>
    <property type="match status" value="1"/>
</dbReference>
<dbReference type="PIRSF" id="PIRSF002161">
    <property type="entry name" value="Ribosomal_L5"/>
    <property type="match status" value="1"/>
</dbReference>
<dbReference type="SUPFAM" id="SSF55282">
    <property type="entry name" value="RL5-like"/>
    <property type="match status" value="1"/>
</dbReference>
<dbReference type="PROSITE" id="PS00358">
    <property type="entry name" value="RIBOSOMAL_L5"/>
    <property type="match status" value="1"/>
</dbReference>
<sequence>MARLKEFYKKDVVTMMMKRFNYSSVMEVPRILKITLNMGVGEAVGDKKVMNHAIEDMTLISGQKPVVTKARKSIAGFKIREGWPIGCKVTLRRERMYEFLDRLISITLPRVRDFRGLNPKSFDGTGNYSMGIHEQIVFPEIDYDKTDGIRGLDICITTSAKTNEEAKALLEAFNLPLKDKDRK</sequence>
<evidence type="ECO:0000255" key="1">
    <source>
        <dbReference type="HAMAP-Rule" id="MF_01333"/>
    </source>
</evidence>
<evidence type="ECO:0000305" key="2"/>
<gene>
    <name evidence="1" type="primary">rplE</name>
    <name type="ordered locus">LPC_3001</name>
</gene>
<keyword id="KW-0687">Ribonucleoprotein</keyword>
<keyword id="KW-0689">Ribosomal protein</keyword>
<keyword id="KW-0694">RNA-binding</keyword>
<keyword id="KW-0699">rRNA-binding</keyword>
<keyword id="KW-0820">tRNA-binding</keyword>
<name>RL5_LEGPC</name>
<feature type="chain" id="PRO_1000052761" description="Large ribosomal subunit protein uL5">
    <location>
        <begin position="1"/>
        <end position="183"/>
    </location>
</feature>
<protein>
    <recommendedName>
        <fullName evidence="1">Large ribosomal subunit protein uL5</fullName>
    </recommendedName>
    <alternativeName>
        <fullName evidence="2">50S ribosomal protein L5</fullName>
    </alternativeName>
</protein>
<accession>A5IHQ2</accession>
<organism>
    <name type="scientific">Legionella pneumophila (strain Corby)</name>
    <dbReference type="NCBI Taxonomy" id="400673"/>
    <lineage>
        <taxon>Bacteria</taxon>
        <taxon>Pseudomonadati</taxon>
        <taxon>Pseudomonadota</taxon>
        <taxon>Gammaproteobacteria</taxon>
        <taxon>Legionellales</taxon>
        <taxon>Legionellaceae</taxon>
        <taxon>Legionella</taxon>
    </lineage>
</organism>